<keyword id="KW-1185">Reference proteome</keyword>
<proteinExistence type="predicted"/>
<name>AC43_NPVAC</name>
<evidence type="ECO:0000269" key="1">
    <source>
    </source>
</evidence>
<comment type="function">
    <text evidence="1">Plays a role in the production of occlusion bodies as well as expression of the polyhedrin gene.</text>
</comment>
<dbReference type="EMBL" id="L22858">
    <property type="protein sequence ID" value="AAA66673.1"/>
    <property type="molecule type" value="Genomic_DNA"/>
</dbReference>
<dbReference type="PIR" id="C72855">
    <property type="entry name" value="C72855"/>
</dbReference>
<dbReference type="RefSeq" id="NP_054072.1">
    <property type="nucleotide sequence ID" value="NC_001623.1"/>
</dbReference>
<dbReference type="GeneID" id="1403875"/>
<dbReference type="KEGG" id="vg:1403875"/>
<dbReference type="OrthoDB" id="24008at10239"/>
<dbReference type="Proteomes" id="UP000008292">
    <property type="component" value="Segment"/>
</dbReference>
<reference key="1">
    <citation type="journal article" date="1994" name="Virology">
        <title>The complete DNA sequence of Autographa californica nuclear polyhedrosis virus.</title>
        <authorList>
            <person name="Ayres M.D."/>
            <person name="Howard S.C."/>
            <person name="Kuzio J."/>
            <person name="Lopez-Ferber M."/>
            <person name="Possee R.D."/>
        </authorList>
    </citation>
    <scope>NUCLEOTIDE SEQUENCE [LARGE SCALE GENOMIC DNA]</scope>
    <source>
        <strain>C6</strain>
    </source>
</reference>
<reference key="2">
    <citation type="journal article" date="2013" name="J. Microbiol.">
        <title>Functional characterization of Autographa californica multiple nucleopolyhedrovirus ORF43 and phenotypic changes of ORF43-knockout mutant.</title>
        <authorList>
            <person name="Tao X.Y."/>
            <person name="Choi J.Y."/>
            <person name="Wang Y."/>
            <person name="Roh J.Y."/>
            <person name="Lee J.H."/>
            <person name="Liu Q."/>
            <person name="Park J.B."/>
            <person name="Kim J.S."/>
            <person name="Kim W."/>
            <person name="Je Y.H."/>
        </authorList>
    </citation>
    <scope>FUNCTION</scope>
</reference>
<accession>P41448</accession>
<organism>
    <name type="scientific">Autographa californica nuclear polyhedrosis virus</name>
    <name type="common">AcMNPV</name>
    <dbReference type="NCBI Taxonomy" id="46015"/>
    <lineage>
        <taxon>Viruses</taxon>
        <taxon>Viruses incertae sedis</taxon>
        <taxon>Naldaviricetes</taxon>
        <taxon>Lefavirales</taxon>
        <taxon>Baculoviridae</taxon>
        <taxon>Alphabaculovirus</taxon>
        <taxon>Alphabaculovirus aucalifornicae</taxon>
    </lineage>
</organism>
<feature type="chain" id="PRO_0000132979" description="Protein AC43">
    <location>
        <begin position="1"/>
        <end position="77"/>
    </location>
</feature>
<sequence length="77" mass="8816">MNTRYATCYVCDELVYLFKKTFSNMSPSAAAFYQRRMAIVKNGIVLCPRCSSELKIGNGVSIPIYPHRAQQHARRSR</sequence>
<protein>
    <recommendedName>
        <fullName>Protein AC43</fullName>
    </recommendedName>
</protein>
<organismHost>
    <name type="scientific">Lepidoptera</name>
    <name type="common">butterflies and moths</name>
    <dbReference type="NCBI Taxonomy" id="7088"/>
</organismHost>